<organism>
    <name type="scientific">Schizosaccharomyces pombe (strain 972 / ATCC 24843)</name>
    <name type="common">Fission yeast</name>
    <dbReference type="NCBI Taxonomy" id="284812"/>
    <lineage>
        <taxon>Eukaryota</taxon>
        <taxon>Fungi</taxon>
        <taxon>Dikarya</taxon>
        <taxon>Ascomycota</taxon>
        <taxon>Taphrinomycotina</taxon>
        <taxon>Schizosaccharomycetes</taxon>
        <taxon>Schizosaccharomycetales</taxon>
        <taxon>Schizosaccharomycetaceae</taxon>
        <taxon>Schizosaccharomyces</taxon>
    </lineage>
</organism>
<sequence>MEEWRNFLDIKVINESSLVTVDNLSLQLDISSEKAQEYLNMFYQGNDFLYPIYLIHGQPIDDEINLEIDEESQPISNFPVLQYILCDKSSLQEKQSRLKSGYKTVIFALSSAPLSDFDELLPAVYEIREKDVLYKKEDADKYGFIFNENSVPRVLKKAPSTHSPQLSVPSKTSTIDKTDTRSTEKTKGKDIFSNARNQKGNSSRKNKKAPLENHKEKEPLLPKEEKLSEQAKRERDDLKNIMQLEDESVSTTSVHDSEDDNLDSNNFQLEIGTEAKSAAPDEPQEIIKSVSGGKRRGKRKVKKYATTKDEEGFLVTKEEEVWESFSEDENISTGTSNVVRNKPTTVNIATKKKNTAQSKPQQKSIMSFFGKK</sequence>
<keyword id="KW-0131">Cell cycle</keyword>
<keyword id="KW-0132">Cell division</keyword>
<keyword id="KW-0235">DNA replication</keyword>
<keyword id="KW-0239">DNA-directed DNA polymerase</keyword>
<keyword id="KW-0498">Mitosis</keyword>
<keyword id="KW-0548">Nucleotidyltransferase</keyword>
<keyword id="KW-0539">Nucleus</keyword>
<keyword id="KW-0597">Phosphoprotein</keyword>
<keyword id="KW-1185">Reference proteome</keyword>
<keyword id="KW-0808">Transferase</keyword>
<name>DPOD3_SCHPO</name>
<evidence type="ECO:0000250" key="1"/>
<evidence type="ECO:0000256" key="2">
    <source>
        <dbReference type="SAM" id="MobiDB-lite"/>
    </source>
</evidence>
<evidence type="ECO:0000269" key="3">
    <source>
    </source>
</evidence>
<evidence type="ECO:0000269" key="4">
    <source>
    </source>
</evidence>
<evidence type="ECO:0000269" key="5">
    <source>
    </source>
</evidence>
<proteinExistence type="evidence at protein level"/>
<dbReference type="EMBL" id="M74062">
    <property type="protein sequence ID" value="AAA35295.1"/>
    <property type="molecule type" value="Genomic_DNA"/>
</dbReference>
<dbReference type="EMBL" id="M83307">
    <property type="protein sequence ID" value="AAA35296.1"/>
    <property type="molecule type" value="mRNA"/>
</dbReference>
<dbReference type="EMBL" id="CU329671">
    <property type="protein sequence ID" value="CAA21288.1"/>
    <property type="molecule type" value="Genomic_DNA"/>
</dbReference>
<dbReference type="PIR" id="T39649">
    <property type="entry name" value="T39649"/>
</dbReference>
<dbReference type="RefSeq" id="NP_595419.1">
    <property type="nucleotide sequence ID" value="NM_001021326.2"/>
</dbReference>
<dbReference type="SMR" id="P30261"/>
<dbReference type="BioGRID" id="276184">
    <property type="interactions" value="20"/>
</dbReference>
<dbReference type="ComplexPortal" id="CPX-2100">
    <property type="entry name" value="DNA polymerase delta complex"/>
</dbReference>
<dbReference type="ELM" id="P30261"/>
<dbReference type="FunCoup" id="P30261">
    <property type="interactions" value="98"/>
</dbReference>
<dbReference type="IntAct" id="P30261">
    <property type="interactions" value="2"/>
</dbReference>
<dbReference type="STRING" id="284812.P30261"/>
<dbReference type="iPTMnet" id="P30261"/>
<dbReference type="PaxDb" id="4896-SPBC1734.02c.1"/>
<dbReference type="EnsemblFungi" id="SPBC1734.02c.1">
    <property type="protein sequence ID" value="SPBC1734.02c.1:pep"/>
    <property type="gene ID" value="SPBC1734.02c"/>
</dbReference>
<dbReference type="GeneID" id="2539627"/>
<dbReference type="KEGG" id="spo:2539627"/>
<dbReference type="PomBase" id="SPBC1734.02c">
    <property type="gene designation" value="cdc27"/>
</dbReference>
<dbReference type="VEuPathDB" id="FungiDB:SPBC1734.02c"/>
<dbReference type="eggNOG" id="ENOG502QPSW">
    <property type="taxonomic scope" value="Eukaryota"/>
</dbReference>
<dbReference type="HOGENOM" id="CLU_809318_0_0_1"/>
<dbReference type="InParanoid" id="P30261"/>
<dbReference type="OMA" id="GFIHNEN"/>
<dbReference type="Reactome" id="R-SPO-110314">
    <property type="pathway name" value="Recognition of DNA damage by PCNA-containing replication complex"/>
</dbReference>
<dbReference type="Reactome" id="R-SPO-174437">
    <property type="pathway name" value="Removal of the Flap Intermediate from the C-strand"/>
</dbReference>
<dbReference type="Reactome" id="R-SPO-5358565">
    <property type="pathway name" value="Mismatch repair (MMR) directed by MSH2:MSH6 (MutSalpha)"/>
</dbReference>
<dbReference type="Reactome" id="R-SPO-5358606">
    <property type="pathway name" value="Mismatch repair (MMR) directed by MSH2:MSH3 (MutSbeta)"/>
</dbReference>
<dbReference type="Reactome" id="R-SPO-5651801">
    <property type="pathway name" value="PCNA-Dependent Long Patch Base Excision Repair"/>
</dbReference>
<dbReference type="Reactome" id="R-SPO-5656169">
    <property type="pathway name" value="Termination of translesion DNA synthesis"/>
</dbReference>
<dbReference type="Reactome" id="R-SPO-5696397">
    <property type="pathway name" value="Gap-filling DNA repair synthesis and ligation in GG-NER"/>
</dbReference>
<dbReference type="Reactome" id="R-SPO-5696400">
    <property type="pathway name" value="Dual Incision in GG-NER"/>
</dbReference>
<dbReference type="Reactome" id="R-SPO-6782135">
    <property type="pathway name" value="Dual incision in TC-NER"/>
</dbReference>
<dbReference type="Reactome" id="R-SPO-6782210">
    <property type="pathway name" value="Gap-filling DNA repair synthesis and ligation in TC-NER"/>
</dbReference>
<dbReference type="Reactome" id="R-SPO-69091">
    <property type="pathway name" value="Polymerase switching"/>
</dbReference>
<dbReference type="Reactome" id="R-SPO-69166">
    <property type="pathway name" value="Removal of the Flap Intermediate"/>
</dbReference>
<dbReference type="Reactome" id="R-SPO-69183">
    <property type="pathway name" value="Processive synthesis on the lagging strand"/>
</dbReference>
<dbReference type="PRO" id="PR:P30261"/>
<dbReference type="Proteomes" id="UP000002485">
    <property type="component" value="Chromosome II"/>
</dbReference>
<dbReference type="GO" id="GO:0005829">
    <property type="term" value="C:cytosol"/>
    <property type="evidence" value="ECO:0007005"/>
    <property type="project" value="PomBase"/>
</dbReference>
<dbReference type="GO" id="GO:0043625">
    <property type="term" value="C:delta DNA polymerase complex"/>
    <property type="evidence" value="ECO:0000314"/>
    <property type="project" value="PomBase"/>
</dbReference>
<dbReference type="GO" id="GO:0005634">
    <property type="term" value="C:nucleus"/>
    <property type="evidence" value="ECO:0007005"/>
    <property type="project" value="PomBase"/>
</dbReference>
<dbReference type="GO" id="GO:0003887">
    <property type="term" value="F:DNA-directed DNA polymerase activity"/>
    <property type="evidence" value="ECO:0007669"/>
    <property type="project" value="UniProtKB-KW"/>
</dbReference>
<dbReference type="GO" id="GO:0051301">
    <property type="term" value="P:cell division"/>
    <property type="evidence" value="ECO:0007669"/>
    <property type="project" value="UniProtKB-KW"/>
</dbReference>
<dbReference type="GO" id="GO:0006271">
    <property type="term" value="P:DNA strand elongation involved in DNA replication"/>
    <property type="evidence" value="ECO:0000318"/>
    <property type="project" value="GO_Central"/>
</dbReference>
<dbReference type="GO" id="GO:1902983">
    <property type="term" value="P:DNA strand elongation involved in mitotic DNA replication"/>
    <property type="evidence" value="ECO:0000314"/>
    <property type="project" value="PomBase"/>
</dbReference>
<dbReference type="GO" id="GO:1904161">
    <property type="term" value="P:DNA synthesis involved in UV-damage excision repair"/>
    <property type="evidence" value="ECO:0000314"/>
    <property type="project" value="PomBase"/>
</dbReference>
<dbReference type="GO" id="GO:1903459">
    <property type="term" value="P:mitotic DNA replication lagging strand elongation"/>
    <property type="evidence" value="ECO:0000305"/>
    <property type="project" value="PomBase"/>
</dbReference>
<dbReference type="GO" id="GO:1903460">
    <property type="term" value="P:mitotic DNA replication leading strand elongation"/>
    <property type="evidence" value="ECO:0000303"/>
    <property type="project" value="PomBase"/>
</dbReference>
<dbReference type="GO" id="GO:0006297">
    <property type="term" value="P:nucleotide-excision repair, DNA gap filling"/>
    <property type="evidence" value="ECO:0000318"/>
    <property type="project" value="GO_Central"/>
</dbReference>
<dbReference type="FunFam" id="3.90.1030.20:FF:000004">
    <property type="entry name" value="DNA polymerase delta subunit 3"/>
    <property type="match status" value="1"/>
</dbReference>
<dbReference type="Gene3D" id="3.90.1030.20">
    <property type="entry name" value="DNA polymerase delta, p66 (Cdc27) subunit, wHTH domain"/>
    <property type="match status" value="1"/>
</dbReference>
<dbReference type="InterPro" id="IPR019038">
    <property type="entry name" value="POLD3"/>
</dbReference>
<dbReference type="InterPro" id="IPR041913">
    <property type="entry name" value="POLD3_sf"/>
</dbReference>
<dbReference type="PANTHER" id="PTHR17598">
    <property type="entry name" value="DNA POLYMERASE DELTA SUBUNIT 3"/>
    <property type="match status" value="1"/>
</dbReference>
<dbReference type="PANTHER" id="PTHR17598:SF13">
    <property type="entry name" value="DNA POLYMERASE DELTA SUBUNIT 3"/>
    <property type="match status" value="1"/>
</dbReference>
<dbReference type="Pfam" id="PF09507">
    <property type="entry name" value="CDC27"/>
    <property type="match status" value="1"/>
</dbReference>
<accession>P30261</accession>
<feature type="chain" id="PRO_0000186049" description="DNA polymerase delta subunit 3">
    <location>
        <begin position="1"/>
        <end position="372"/>
    </location>
</feature>
<feature type="region of interest" description="Disordered" evidence="2">
    <location>
        <begin position="156"/>
        <end position="264"/>
    </location>
</feature>
<feature type="region of interest" description="Disordered" evidence="2">
    <location>
        <begin position="352"/>
        <end position="372"/>
    </location>
</feature>
<feature type="compositionally biased region" description="Polar residues" evidence="2">
    <location>
        <begin position="160"/>
        <end position="173"/>
    </location>
</feature>
<feature type="compositionally biased region" description="Basic and acidic residues" evidence="2">
    <location>
        <begin position="174"/>
        <end position="190"/>
    </location>
</feature>
<feature type="compositionally biased region" description="Basic and acidic residues" evidence="2">
    <location>
        <begin position="209"/>
        <end position="239"/>
    </location>
</feature>
<feature type="compositionally biased region" description="Polar residues" evidence="2">
    <location>
        <begin position="355"/>
        <end position="365"/>
    </location>
</feature>
<feature type="modified residue" description="Phosphoserine" evidence="5">
    <location>
        <position position="163"/>
    </location>
</feature>
<feature type="mutagenesis site" description="Cell cycle arrest at 35 degrees Celsius." evidence="4">
    <original>G</original>
    <variation>E</variation>
    <location>
        <position position="57"/>
    </location>
</feature>
<feature type="mutagenesis site" description="Cell cycle arrest at 35 degrees Celsius." evidence="4">
    <original>G</original>
    <variation>R</variation>
    <location>
        <position position="57"/>
    </location>
</feature>
<gene>
    <name type="primary">cdc27</name>
    <name type="ORF">SPBC1734.02c</name>
    <name type="ORF">SPBC337.18c</name>
</gene>
<protein>
    <recommendedName>
        <fullName>DNA polymerase delta subunit 3</fullName>
    </recommendedName>
    <alternativeName>
        <fullName>Cell division control protein 27</fullName>
    </alternativeName>
</protein>
<comment type="subunit">
    <text evidence="3">Heterotetramer that consist of the pol3, cdc1, cdc27 and cdm1 subunits. Cdc27 interacts with cdc1 and is required for dimerization of the tetramer.</text>
</comment>
<comment type="interaction">
    <interactant intactId="EBI-866919">
        <id>P30261</id>
    </interactant>
    <interactant intactId="EBI-865227">
        <id>P87324</id>
        <label>cdc1</label>
    </interactant>
    <organismsDiffer>false</organismsDiffer>
    <experiments>3</experiments>
</comment>
<comment type="interaction">
    <interactant intactId="EBI-866919">
        <id>P30261</id>
    </interactant>
    <interactant intactId="EBI-768724">
        <id>Q03392</id>
        <label>pcn1</label>
    </interactant>
    <organismsDiffer>false</organismsDiffer>
    <experiments>5</experiments>
</comment>
<comment type="subcellular location">
    <subcellularLocation>
        <location evidence="1">Nucleus</location>
    </subcellularLocation>
</comment>
<reference key="1">
    <citation type="journal article" date="1992" name="Mol. Gen. Genet.">
        <title>Molecular cloning and sequence analysis of cdc27+ required for the G2-M transition in the fission yeast Schizosaccharomyces pombe.</title>
        <authorList>
            <person name="Hughes D.A."/>
            <person name="Macneill S.A."/>
            <person name="Fantes P.A."/>
        </authorList>
    </citation>
    <scope>NUCLEOTIDE SEQUENCE [GENOMIC DNA / MRNA]</scope>
    <scope>MUTAGENESIS OF GLY-57</scope>
</reference>
<reference key="2">
    <citation type="journal article" date="2002" name="Nature">
        <title>The genome sequence of Schizosaccharomyces pombe.</title>
        <authorList>
            <person name="Wood V."/>
            <person name="Gwilliam R."/>
            <person name="Rajandream M.A."/>
            <person name="Lyne M.H."/>
            <person name="Lyne R."/>
            <person name="Stewart A."/>
            <person name="Sgouros J.G."/>
            <person name="Peat N."/>
            <person name="Hayles J."/>
            <person name="Baker S.G."/>
            <person name="Basham D."/>
            <person name="Bowman S."/>
            <person name="Brooks K."/>
            <person name="Brown D."/>
            <person name="Brown S."/>
            <person name="Chillingworth T."/>
            <person name="Churcher C.M."/>
            <person name="Collins M."/>
            <person name="Connor R."/>
            <person name="Cronin A."/>
            <person name="Davis P."/>
            <person name="Feltwell T."/>
            <person name="Fraser A."/>
            <person name="Gentles S."/>
            <person name="Goble A."/>
            <person name="Hamlin N."/>
            <person name="Harris D.E."/>
            <person name="Hidalgo J."/>
            <person name="Hodgson G."/>
            <person name="Holroyd S."/>
            <person name="Hornsby T."/>
            <person name="Howarth S."/>
            <person name="Huckle E.J."/>
            <person name="Hunt S."/>
            <person name="Jagels K."/>
            <person name="James K.D."/>
            <person name="Jones L."/>
            <person name="Jones M."/>
            <person name="Leather S."/>
            <person name="McDonald S."/>
            <person name="McLean J."/>
            <person name="Mooney P."/>
            <person name="Moule S."/>
            <person name="Mungall K.L."/>
            <person name="Murphy L.D."/>
            <person name="Niblett D."/>
            <person name="Odell C."/>
            <person name="Oliver K."/>
            <person name="O'Neil S."/>
            <person name="Pearson D."/>
            <person name="Quail M.A."/>
            <person name="Rabbinowitsch E."/>
            <person name="Rutherford K.M."/>
            <person name="Rutter S."/>
            <person name="Saunders D."/>
            <person name="Seeger K."/>
            <person name="Sharp S."/>
            <person name="Skelton J."/>
            <person name="Simmonds M.N."/>
            <person name="Squares R."/>
            <person name="Squares S."/>
            <person name="Stevens K."/>
            <person name="Taylor K."/>
            <person name="Taylor R.G."/>
            <person name="Tivey A."/>
            <person name="Walsh S.V."/>
            <person name="Warren T."/>
            <person name="Whitehead S."/>
            <person name="Woodward J.R."/>
            <person name="Volckaert G."/>
            <person name="Aert R."/>
            <person name="Robben J."/>
            <person name="Grymonprez B."/>
            <person name="Weltjens I."/>
            <person name="Vanstreels E."/>
            <person name="Rieger M."/>
            <person name="Schaefer M."/>
            <person name="Mueller-Auer S."/>
            <person name="Gabel C."/>
            <person name="Fuchs M."/>
            <person name="Duesterhoeft A."/>
            <person name="Fritzc C."/>
            <person name="Holzer E."/>
            <person name="Moestl D."/>
            <person name="Hilbert H."/>
            <person name="Borzym K."/>
            <person name="Langer I."/>
            <person name="Beck A."/>
            <person name="Lehrach H."/>
            <person name="Reinhardt R."/>
            <person name="Pohl T.M."/>
            <person name="Eger P."/>
            <person name="Zimmermann W."/>
            <person name="Wedler H."/>
            <person name="Wambutt R."/>
            <person name="Purnelle B."/>
            <person name="Goffeau A."/>
            <person name="Cadieu E."/>
            <person name="Dreano S."/>
            <person name="Gloux S."/>
            <person name="Lelaure V."/>
            <person name="Mottier S."/>
            <person name="Galibert F."/>
            <person name="Aves S.J."/>
            <person name="Xiang Z."/>
            <person name="Hunt C."/>
            <person name="Moore K."/>
            <person name="Hurst S.M."/>
            <person name="Lucas M."/>
            <person name="Rochet M."/>
            <person name="Gaillardin C."/>
            <person name="Tallada V.A."/>
            <person name="Garzon A."/>
            <person name="Thode G."/>
            <person name="Daga R.R."/>
            <person name="Cruzado L."/>
            <person name="Jimenez J."/>
            <person name="Sanchez M."/>
            <person name="del Rey F."/>
            <person name="Benito J."/>
            <person name="Dominguez A."/>
            <person name="Revuelta J.L."/>
            <person name="Moreno S."/>
            <person name="Armstrong J."/>
            <person name="Forsburg S.L."/>
            <person name="Cerutti L."/>
            <person name="Lowe T."/>
            <person name="McCombie W.R."/>
            <person name="Paulsen I."/>
            <person name="Potashkin J."/>
            <person name="Shpakovski G.V."/>
            <person name="Ussery D."/>
            <person name="Barrell B.G."/>
            <person name="Nurse P."/>
        </authorList>
    </citation>
    <scope>NUCLEOTIDE SEQUENCE [LARGE SCALE GENOMIC DNA]</scope>
    <source>
        <strain>972 / ATCC 24843</strain>
    </source>
</reference>
<reference key="3">
    <citation type="journal article" date="2000" name="J. Biol. Chem.">
        <title>Structure and activity associated with multiple forms of Schizosaccharomyces pombe DNA polymerase delta.</title>
        <authorList>
            <person name="Zuo S."/>
            <person name="Bermudez V."/>
            <person name="Zhang G."/>
            <person name="Kelman Z."/>
            <person name="Hurwitz J."/>
        </authorList>
    </citation>
    <scope>FUNCTION</scope>
    <scope>SUBUNIT</scope>
</reference>
<reference key="4">
    <citation type="journal article" date="2008" name="J. Proteome Res.">
        <title>Phosphoproteome analysis of fission yeast.</title>
        <authorList>
            <person name="Wilson-Grady J.T."/>
            <person name="Villen J."/>
            <person name="Gygi S.P."/>
        </authorList>
    </citation>
    <scope>PHOSPHORYLATION [LARGE SCALE ANALYSIS] AT SER-163</scope>
    <scope>IDENTIFICATION BY MASS SPECTROMETRY</scope>
</reference>